<protein>
    <recommendedName>
        <fullName evidence="1">Hemin import ATP-binding protein HmuV</fullName>
        <ecNumber evidence="1">7.6.2.-</ecNumber>
    </recommendedName>
</protein>
<gene>
    <name evidence="1" type="primary">hmuV</name>
    <name type="ordered locus">BMAA1830</name>
</gene>
<feature type="chain" id="PRO_0000269582" description="Hemin import ATP-binding protein HmuV">
    <location>
        <begin position="1"/>
        <end position="272"/>
    </location>
</feature>
<feature type="domain" description="ABC transporter" evidence="1">
    <location>
        <begin position="2"/>
        <end position="255"/>
    </location>
</feature>
<feature type="binding site" evidence="1">
    <location>
        <begin position="34"/>
        <end position="41"/>
    </location>
    <ligand>
        <name>ATP</name>
        <dbReference type="ChEBI" id="CHEBI:30616"/>
    </ligand>
</feature>
<dbReference type="EC" id="7.6.2.-" evidence="1"/>
<dbReference type="EMBL" id="CP000011">
    <property type="protein sequence ID" value="AAU45782.1"/>
    <property type="molecule type" value="Genomic_DNA"/>
</dbReference>
<dbReference type="RefSeq" id="WP_004188492.1">
    <property type="nucleotide sequence ID" value="NC_006349.2"/>
</dbReference>
<dbReference type="RefSeq" id="YP_106381.1">
    <property type="nucleotide sequence ID" value="NC_006349.2"/>
</dbReference>
<dbReference type="SMR" id="Q62A98"/>
<dbReference type="KEGG" id="bma:BMAA1830"/>
<dbReference type="PATRIC" id="fig|243160.12.peg.5430"/>
<dbReference type="eggNOG" id="COG4559">
    <property type="taxonomic scope" value="Bacteria"/>
</dbReference>
<dbReference type="HOGENOM" id="CLU_000604_1_11_4"/>
<dbReference type="Proteomes" id="UP000006693">
    <property type="component" value="Chromosome 2"/>
</dbReference>
<dbReference type="GO" id="GO:0005886">
    <property type="term" value="C:plasma membrane"/>
    <property type="evidence" value="ECO:0007669"/>
    <property type="project" value="UniProtKB-SubCell"/>
</dbReference>
<dbReference type="GO" id="GO:0005524">
    <property type="term" value="F:ATP binding"/>
    <property type="evidence" value="ECO:0007669"/>
    <property type="project" value="UniProtKB-KW"/>
</dbReference>
<dbReference type="GO" id="GO:0016887">
    <property type="term" value="F:ATP hydrolysis activity"/>
    <property type="evidence" value="ECO:0007669"/>
    <property type="project" value="InterPro"/>
</dbReference>
<dbReference type="CDD" id="cd03214">
    <property type="entry name" value="ABC_Iron-Siderophores_B12_Hemin"/>
    <property type="match status" value="1"/>
</dbReference>
<dbReference type="Gene3D" id="3.40.50.300">
    <property type="entry name" value="P-loop containing nucleotide triphosphate hydrolases"/>
    <property type="match status" value="1"/>
</dbReference>
<dbReference type="InterPro" id="IPR003593">
    <property type="entry name" value="AAA+_ATPase"/>
</dbReference>
<dbReference type="InterPro" id="IPR003439">
    <property type="entry name" value="ABC_transporter-like_ATP-bd"/>
</dbReference>
<dbReference type="InterPro" id="IPR017871">
    <property type="entry name" value="ABC_transporter-like_CS"/>
</dbReference>
<dbReference type="InterPro" id="IPR027417">
    <property type="entry name" value="P-loop_NTPase"/>
</dbReference>
<dbReference type="NCBIfam" id="NF010067">
    <property type="entry name" value="PRK13547.1"/>
    <property type="match status" value="1"/>
</dbReference>
<dbReference type="NCBIfam" id="NF010068">
    <property type="entry name" value="PRK13548.1"/>
    <property type="match status" value="1"/>
</dbReference>
<dbReference type="PANTHER" id="PTHR42794">
    <property type="entry name" value="HEMIN IMPORT ATP-BINDING PROTEIN HMUV"/>
    <property type="match status" value="1"/>
</dbReference>
<dbReference type="PANTHER" id="PTHR42794:SF1">
    <property type="entry name" value="HEMIN IMPORT ATP-BINDING PROTEIN HMUV"/>
    <property type="match status" value="1"/>
</dbReference>
<dbReference type="Pfam" id="PF00005">
    <property type="entry name" value="ABC_tran"/>
    <property type="match status" value="1"/>
</dbReference>
<dbReference type="SMART" id="SM00382">
    <property type="entry name" value="AAA"/>
    <property type="match status" value="1"/>
</dbReference>
<dbReference type="SUPFAM" id="SSF52540">
    <property type="entry name" value="P-loop containing nucleoside triphosphate hydrolases"/>
    <property type="match status" value="1"/>
</dbReference>
<dbReference type="PROSITE" id="PS00211">
    <property type="entry name" value="ABC_TRANSPORTER_1"/>
    <property type="match status" value="1"/>
</dbReference>
<dbReference type="PROSITE" id="PS50893">
    <property type="entry name" value="ABC_TRANSPORTER_2"/>
    <property type="match status" value="1"/>
</dbReference>
<dbReference type="PROSITE" id="PS51261">
    <property type="entry name" value="HMUV"/>
    <property type="match status" value="1"/>
</dbReference>
<organism>
    <name type="scientific">Burkholderia mallei (strain ATCC 23344)</name>
    <dbReference type="NCBI Taxonomy" id="243160"/>
    <lineage>
        <taxon>Bacteria</taxon>
        <taxon>Pseudomonadati</taxon>
        <taxon>Pseudomonadota</taxon>
        <taxon>Betaproteobacteria</taxon>
        <taxon>Burkholderiales</taxon>
        <taxon>Burkholderiaceae</taxon>
        <taxon>Burkholderia</taxon>
        <taxon>pseudomallei group</taxon>
    </lineage>
</organism>
<keyword id="KW-0067">ATP-binding</keyword>
<keyword id="KW-0997">Cell inner membrane</keyword>
<keyword id="KW-1003">Cell membrane</keyword>
<keyword id="KW-0472">Membrane</keyword>
<keyword id="KW-0547">Nucleotide-binding</keyword>
<keyword id="KW-1185">Reference proteome</keyword>
<keyword id="KW-1278">Translocase</keyword>
<keyword id="KW-0813">Transport</keyword>
<evidence type="ECO:0000255" key="1">
    <source>
        <dbReference type="HAMAP-Rule" id="MF_01718"/>
    </source>
</evidence>
<proteinExistence type="inferred from homology"/>
<comment type="function">
    <text evidence="1">Part of the ABC transporter complex HmuTUV involved in hemin import. Responsible for energy coupling to the transport system.</text>
</comment>
<comment type="subunit">
    <text evidence="1">The complex is composed of two ATP-binding proteins (HmuV), two transmembrane proteins (HmuU) and a solute-binding protein (HmuT).</text>
</comment>
<comment type="subcellular location">
    <subcellularLocation>
        <location evidence="1">Cell inner membrane</location>
        <topology evidence="1">Peripheral membrane protein</topology>
    </subcellularLocation>
</comment>
<comment type="similarity">
    <text evidence="1">Belongs to the ABC transporter superfamily. Heme (hemin) importer (TC 3.A.1.14.5) family.</text>
</comment>
<accession>Q62A98</accession>
<reference key="1">
    <citation type="journal article" date="2004" name="Proc. Natl. Acad. Sci. U.S.A.">
        <title>Structural flexibility in the Burkholderia mallei genome.</title>
        <authorList>
            <person name="Nierman W.C."/>
            <person name="DeShazer D."/>
            <person name="Kim H.S."/>
            <person name="Tettelin H."/>
            <person name="Nelson K.E."/>
            <person name="Feldblyum T.V."/>
            <person name="Ulrich R.L."/>
            <person name="Ronning C.M."/>
            <person name="Brinkac L.M."/>
            <person name="Daugherty S.C."/>
            <person name="Davidsen T.D."/>
            <person name="DeBoy R.T."/>
            <person name="Dimitrov G."/>
            <person name="Dodson R.J."/>
            <person name="Durkin A.S."/>
            <person name="Gwinn M.L."/>
            <person name="Haft D.H."/>
            <person name="Khouri H.M."/>
            <person name="Kolonay J.F."/>
            <person name="Madupu R."/>
            <person name="Mohammoud Y."/>
            <person name="Nelson W.C."/>
            <person name="Radune D."/>
            <person name="Romero C.M."/>
            <person name="Sarria S."/>
            <person name="Selengut J."/>
            <person name="Shamblin C."/>
            <person name="Sullivan S.A."/>
            <person name="White O."/>
            <person name="Yu Y."/>
            <person name="Zafar N."/>
            <person name="Zhou L."/>
            <person name="Fraser C.M."/>
        </authorList>
    </citation>
    <scope>NUCLEOTIDE SEQUENCE [LARGE SCALE GENOMIC DNA]</scope>
    <source>
        <strain>ATCC 23344</strain>
    </source>
</reference>
<sequence>MLNADHLHVARDGRAILNDLSIRIAPGCVTALLGRNGAGKSTLLGVLAGDLPAGGLARGATVRGGVALNGEPLHAIDAPRLARLRAVLPQASRPAFAFSAREIVLLGRYPHARRAGALTHADGEIASQALALAGATALDARDVTTLSGGELARVQFARVLAQLWPPPGAAQPPRYLLLDEPTAALDLAHQHQLLDTVRRLSRDWNLGVLTIVHDPNLAARHADRIAMLADGAIVAQGAPADVLRPEPIARCYGFRVRLVDAGDGVAPVIVPA</sequence>
<name>HMUV_BURMA</name>